<feature type="chain" id="PRO_0000337045" description="Inhibitory synaptic factor 1">
    <location>
        <begin position="1"/>
        <end position="293"/>
    </location>
</feature>
<feature type="region of interest" description="Disordered" evidence="3">
    <location>
        <begin position="1"/>
        <end position="26"/>
    </location>
</feature>
<feature type="region of interest" description="Disordered" evidence="3">
    <location>
        <begin position="120"/>
        <end position="186"/>
    </location>
</feature>
<feature type="region of interest" description="Disordered" evidence="3">
    <location>
        <begin position="200"/>
        <end position="293"/>
    </location>
</feature>
<feature type="coiled-coil region" evidence="2">
    <location>
        <begin position="30"/>
        <end position="63"/>
    </location>
</feature>
<feature type="compositionally biased region" description="Polar residues" evidence="3">
    <location>
        <begin position="171"/>
        <end position="180"/>
    </location>
</feature>
<feature type="compositionally biased region" description="Acidic residues" evidence="3">
    <location>
        <begin position="200"/>
        <end position="215"/>
    </location>
</feature>
<feature type="compositionally biased region" description="Polar residues" evidence="3">
    <location>
        <begin position="243"/>
        <end position="256"/>
    </location>
</feature>
<feature type="compositionally biased region" description="Polar residues" evidence="3">
    <location>
        <begin position="264"/>
        <end position="286"/>
    </location>
</feature>
<gene>
    <name evidence="5" type="primary">INSYN1</name>
    <name type="synonym">C15orf59</name>
</gene>
<evidence type="ECO:0000250" key="1">
    <source>
        <dbReference type="UniProtKB" id="Q8CD60"/>
    </source>
</evidence>
<evidence type="ECO:0000255" key="2"/>
<evidence type="ECO:0000256" key="3">
    <source>
        <dbReference type="SAM" id="MobiDB-lite"/>
    </source>
</evidence>
<evidence type="ECO:0000305" key="4"/>
<evidence type="ECO:0000312" key="5">
    <source>
        <dbReference type="HGNC" id="HGNC:33753"/>
    </source>
</evidence>
<name>INSY1_HUMAN</name>
<dbReference type="EMBL" id="BC111368">
    <property type="protein sequence ID" value="AAI11369.1"/>
    <property type="molecule type" value="mRNA"/>
</dbReference>
<dbReference type="CCDS" id="CCDS32289.1"/>
<dbReference type="RefSeq" id="NP_001034703.1">
    <property type="nucleotide sequence ID" value="NM_001039614.3"/>
</dbReference>
<dbReference type="RefSeq" id="NP_001371280.1">
    <property type="nucleotide sequence ID" value="NM_001384351.1"/>
</dbReference>
<dbReference type="RefSeq" id="XP_005254426.1">
    <property type="nucleotide sequence ID" value="XM_005254369.4"/>
</dbReference>
<dbReference type="SMR" id="Q2T9L4"/>
<dbReference type="BioGRID" id="132568">
    <property type="interactions" value="278"/>
</dbReference>
<dbReference type="FunCoup" id="Q2T9L4">
    <property type="interactions" value="15"/>
</dbReference>
<dbReference type="IntAct" id="Q2T9L4">
    <property type="interactions" value="168"/>
</dbReference>
<dbReference type="STRING" id="9606.ENSP00000457205"/>
<dbReference type="GlyGen" id="Q2T9L4">
    <property type="glycosylation" value="1 site"/>
</dbReference>
<dbReference type="iPTMnet" id="Q2T9L4"/>
<dbReference type="PhosphoSitePlus" id="Q2T9L4"/>
<dbReference type="BioMuta" id="C15orf59"/>
<dbReference type="DMDM" id="121941727"/>
<dbReference type="MassIVE" id="Q2T9L4"/>
<dbReference type="PaxDb" id="9606-ENSP00000457205"/>
<dbReference type="PeptideAtlas" id="Q2T9L4"/>
<dbReference type="Antibodypedia" id="52382">
    <property type="antibodies" value="14 antibodies from 8 providers"/>
</dbReference>
<dbReference type="DNASU" id="388135"/>
<dbReference type="Ensembl" id="ENST00000569673.3">
    <property type="protein sequence ID" value="ENSP00000457205.1"/>
    <property type="gene ID" value="ENSG00000205363.7"/>
</dbReference>
<dbReference type="GeneID" id="388135"/>
<dbReference type="KEGG" id="hsa:388135"/>
<dbReference type="MANE-Select" id="ENST00000569673.3">
    <property type="protein sequence ID" value="ENSP00000457205.1"/>
    <property type="RefSeq nucleotide sequence ID" value="NM_001039614.3"/>
    <property type="RefSeq protein sequence ID" value="NP_001034703.1"/>
</dbReference>
<dbReference type="UCSC" id="uc002avy.4">
    <property type="organism name" value="human"/>
</dbReference>
<dbReference type="AGR" id="HGNC:33753"/>
<dbReference type="CTD" id="388135"/>
<dbReference type="DisGeNET" id="388135"/>
<dbReference type="GeneCards" id="INSYN1"/>
<dbReference type="HGNC" id="HGNC:33753">
    <property type="gene designation" value="INSYN1"/>
</dbReference>
<dbReference type="HPA" id="ENSG00000205363">
    <property type="expression patterns" value="Tissue enhanced (brain, heart muscle)"/>
</dbReference>
<dbReference type="MIM" id="617128">
    <property type="type" value="gene"/>
</dbReference>
<dbReference type="neXtProt" id="NX_Q2T9L4"/>
<dbReference type="OpenTargets" id="ENSG00000205363"/>
<dbReference type="PharmGKB" id="PA162378260"/>
<dbReference type="VEuPathDB" id="HostDB:ENSG00000205363"/>
<dbReference type="eggNOG" id="ENOG502R2SS">
    <property type="taxonomic scope" value="Eukaryota"/>
</dbReference>
<dbReference type="GeneTree" id="ENSGT00910000144204"/>
<dbReference type="HOGENOM" id="CLU_073752_1_0_1"/>
<dbReference type="InParanoid" id="Q2T9L4"/>
<dbReference type="OMA" id="HSLLYNC"/>
<dbReference type="OrthoDB" id="9946710at2759"/>
<dbReference type="PAN-GO" id="Q2T9L4">
    <property type="GO annotations" value="2 GO annotations based on evolutionary models"/>
</dbReference>
<dbReference type="PhylomeDB" id="Q2T9L4"/>
<dbReference type="TreeFam" id="TF332382"/>
<dbReference type="PathwayCommons" id="Q2T9L4"/>
<dbReference type="SignaLink" id="Q2T9L4"/>
<dbReference type="BioGRID-ORCS" id="388135">
    <property type="hits" value="10 hits in 1110 CRISPR screens"/>
</dbReference>
<dbReference type="GenomeRNAi" id="388135"/>
<dbReference type="Pharos" id="Q2T9L4">
    <property type="development level" value="Tdark"/>
</dbReference>
<dbReference type="PRO" id="PR:Q2T9L4"/>
<dbReference type="Proteomes" id="UP000005640">
    <property type="component" value="Chromosome 15"/>
</dbReference>
<dbReference type="RNAct" id="Q2T9L4">
    <property type="molecule type" value="protein"/>
</dbReference>
<dbReference type="Bgee" id="ENSG00000205363">
    <property type="expression patterns" value="Expressed in apex of heart and 147 other cell types or tissues"/>
</dbReference>
<dbReference type="ExpressionAtlas" id="Q2T9L4">
    <property type="expression patterns" value="baseline and differential"/>
</dbReference>
<dbReference type="GO" id="GO:0098982">
    <property type="term" value="C:GABA-ergic synapse"/>
    <property type="evidence" value="ECO:0007669"/>
    <property type="project" value="Ensembl"/>
</dbReference>
<dbReference type="GO" id="GO:0014069">
    <property type="term" value="C:postsynaptic density"/>
    <property type="evidence" value="ECO:0000250"/>
    <property type="project" value="UniProtKB"/>
</dbReference>
<dbReference type="GO" id="GO:0060080">
    <property type="term" value="P:inhibitory postsynaptic potential"/>
    <property type="evidence" value="ECO:0000250"/>
    <property type="project" value="UniProtKB"/>
</dbReference>
<dbReference type="GO" id="GO:0099084">
    <property type="term" value="P:postsynaptic specialization organization"/>
    <property type="evidence" value="ECO:0007669"/>
    <property type="project" value="Ensembl"/>
</dbReference>
<dbReference type="InterPro" id="IPR027997">
    <property type="entry name" value="Largen/INSYN1"/>
</dbReference>
<dbReference type="PANTHER" id="PTHR15917">
    <property type="match status" value="1"/>
</dbReference>
<dbReference type="PANTHER" id="PTHR15917:SF3">
    <property type="entry name" value="INHIBITORY SYNAPTIC FACTOR 1"/>
    <property type="match status" value="1"/>
</dbReference>
<dbReference type="Pfam" id="PF15252">
    <property type="entry name" value="DUF4589"/>
    <property type="match status" value="1"/>
</dbReference>
<accession>Q2T9L4</accession>
<proteinExistence type="evidence at protein level"/>
<sequence length="293" mass="31928">MNIRGAPDLGQPSDDPSSGGERERIRQRMKMVIGQLEGILRELKEVAKELREVVSQIDKLTSDFDFELEPDDWTTATVSSTSSSDKAGMGGPFDLGHLDFMTADILSDSWEFCSFLDVSTPSDSVDGPESTRPGAGPDYRLMNGGTPIPNGPRVETPDSSSEEAFGAGPTVKSQLPQRTPGTRERVRFSDKVLYHALCCDDEEGDGEQEVEEEEVGLPPEPAHTEAHAGPHKPSPAPYKSRRSPLTSRHSGSTLAPEQTRRVTRNSSTQTVSDKSTQTVLPYTATRQKARGKN</sequence>
<organism>
    <name type="scientific">Homo sapiens</name>
    <name type="common">Human</name>
    <dbReference type="NCBI Taxonomy" id="9606"/>
    <lineage>
        <taxon>Eukaryota</taxon>
        <taxon>Metazoa</taxon>
        <taxon>Chordata</taxon>
        <taxon>Craniata</taxon>
        <taxon>Vertebrata</taxon>
        <taxon>Euteleostomi</taxon>
        <taxon>Mammalia</taxon>
        <taxon>Eutheria</taxon>
        <taxon>Euarchontoglires</taxon>
        <taxon>Primates</taxon>
        <taxon>Haplorrhini</taxon>
        <taxon>Catarrhini</taxon>
        <taxon>Hominidae</taxon>
        <taxon>Homo</taxon>
    </lineage>
</organism>
<comment type="function">
    <text evidence="1">Component of the protein machinery at the inhibitory synapses, probably acting as a scaffold. Inhibitory synapses dampen neuronal activity through postsynaptic hyperpolarization. This synaptic inhibition is fundamental for the functioning of the central nervous system, shaping and orchestrating the flow of information through neuronal networks to generate a precise neural code.</text>
</comment>
<comment type="subunit">
    <text evidence="1">Interacts with GPHN.</text>
</comment>
<comment type="interaction">
    <interactant intactId="EBI-4311436">
        <id>Q2T9L4</id>
    </interactant>
    <interactant intactId="EBI-11096309">
        <id>Q9NYB9-2</id>
        <label>ABI2</label>
    </interactant>
    <organismsDiffer>false</organismsDiffer>
    <experiments>3</experiments>
</comment>
<comment type="interaction">
    <interactant intactId="EBI-4311436">
        <id>Q2T9L4</id>
    </interactant>
    <interactant intactId="EBI-465781">
        <id>Q9UL45</id>
        <label>BLOC1S6</label>
    </interactant>
    <organismsDiffer>false</organismsDiffer>
    <experiments>7</experiments>
</comment>
<comment type="interaction">
    <interactant intactId="EBI-4311436">
        <id>Q2T9L4</id>
    </interactant>
    <interactant intactId="EBI-10193358">
        <id>Q96GS4</id>
        <label>BORCS6</label>
    </interactant>
    <organismsDiffer>false</organismsDiffer>
    <experiments>4</experiments>
</comment>
<comment type="interaction">
    <interactant intactId="EBI-4311436">
        <id>Q2T9L4</id>
    </interactant>
    <interactant intactId="EBI-741214">
        <id>Q9UFG5</id>
        <label>C19orf25</label>
    </interactant>
    <organismsDiffer>false</organismsDiffer>
    <experiments>3</experiments>
</comment>
<comment type="interaction">
    <interactant intactId="EBI-4311436">
        <id>Q2T9L4</id>
    </interactant>
    <interactant intactId="EBI-10749669">
        <id>Q8IYE0</id>
        <label>CCDC146</label>
    </interactant>
    <organismsDiffer>false</organismsDiffer>
    <experiments>3</experiments>
</comment>
<comment type="interaction">
    <interactant intactId="EBI-4311436">
        <id>Q2T9L4</id>
    </interactant>
    <interactant intactId="EBI-11984733">
        <id>O60941-5</id>
        <label>DTNB</label>
    </interactant>
    <organismsDiffer>false</organismsDiffer>
    <experiments>3</experiments>
</comment>
<comment type="interaction">
    <interactant intactId="EBI-4311436">
        <id>Q2T9L4</id>
    </interactant>
    <interactant intactId="EBI-720116">
        <id>P60520</id>
        <label>GABARAPL2</label>
    </interactant>
    <organismsDiffer>false</organismsDiffer>
    <experiments>3</experiments>
</comment>
<comment type="interaction">
    <interactant intactId="EBI-4311436">
        <id>Q2T9L4</id>
    </interactant>
    <interactant intactId="EBI-348259">
        <id>Q96EZ8</id>
        <label>MCRS1</label>
    </interactant>
    <organismsDiffer>false</organismsDiffer>
    <experiments>4</experiments>
</comment>
<comment type="interaction">
    <interactant intactId="EBI-4311436">
        <id>Q2T9L4</id>
    </interactant>
    <interactant intactId="EBI-741171">
        <id>Q96AL5</id>
        <label>PBX3</label>
    </interactant>
    <organismsDiffer>false</organismsDiffer>
    <experiments>3</experiments>
</comment>
<comment type="interaction">
    <interactant intactId="EBI-4311436">
        <id>Q2T9L4</id>
    </interactant>
    <interactant intactId="EBI-296723">
        <id>O95295</id>
        <label>SNAPIN</label>
    </interactant>
    <organismsDiffer>false</organismsDiffer>
    <experiments>4</experiments>
</comment>
<comment type="interaction">
    <interactant intactId="EBI-4311436">
        <id>Q2T9L4</id>
    </interactant>
    <interactant intactId="EBI-712969">
        <id>Q9Y3C0</id>
        <label>WASHC3</label>
    </interactant>
    <organismsDiffer>false</organismsDiffer>
    <experiments>4</experiments>
</comment>
<comment type="subcellular location">
    <subcellularLocation>
        <location evidence="1">Postsynaptic density</location>
    </subcellularLocation>
</comment>
<comment type="similarity">
    <text evidence="4">Belongs to the INSYN1 family.</text>
</comment>
<reference key="1">
    <citation type="journal article" date="2004" name="Genome Res.">
        <title>The status, quality, and expansion of the NIH full-length cDNA project: the Mammalian Gene Collection (MGC).</title>
        <authorList>
            <consortium name="The MGC Project Team"/>
        </authorList>
    </citation>
    <scope>NUCLEOTIDE SEQUENCE [LARGE SCALE MRNA]</scope>
    <source>
        <tissue>Embryonic stem cell</tissue>
    </source>
</reference>
<keyword id="KW-0175">Coiled coil</keyword>
<keyword id="KW-1185">Reference proteome</keyword>
<keyword id="KW-0770">Synapse</keyword>
<protein>
    <recommendedName>
        <fullName evidence="4">Inhibitory synaptic factor 1</fullName>
        <shortName evidence="4">InSyn1</shortName>
    </recommendedName>
</protein>